<feature type="chain" id="PRO_0000411144" description="Cobalt transport protein CbiM 1">
    <location>
        <begin position="1"/>
        <end position="226"/>
    </location>
</feature>
<feature type="transmembrane region" description="Helical" evidence="1">
    <location>
        <begin position="6"/>
        <end position="26"/>
    </location>
</feature>
<feature type="transmembrane region" description="Helical" evidence="1">
    <location>
        <begin position="43"/>
        <end position="63"/>
    </location>
</feature>
<feature type="transmembrane region" description="Helical" evidence="1">
    <location>
        <begin position="75"/>
        <end position="95"/>
    </location>
</feature>
<feature type="transmembrane region" description="Helical" evidence="1">
    <location>
        <begin position="107"/>
        <end position="127"/>
    </location>
</feature>
<feature type="transmembrane region" description="Helical" evidence="1">
    <location>
        <begin position="135"/>
        <end position="155"/>
    </location>
</feature>
<feature type="transmembrane region" description="Helical" evidence="1">
    <location>
        <begin position="181"/>
        <end position="201"/>
    </location>
</feature>
<comment type="function">
    <text evidence="1">Part of the energy-coupling factor (ECF) transporter complex CbiMNOQ involved in cobalt import.</text>
</comment>
<comment type="pathway">
    <text evidence="1">Cofactor biosynthesis; adenosylcobalamin biosynthesis.</text>
</comment>
<comment type="subunit">
    <text evidence="1">Forms an energy-coupling factor (ECF) transporter complex composed of an ATP-binding protein (A component, CbiO), a transmembrane protein (T component, CbiQ) and 2 possible substrate-capture proteins (S components, CbiM and CbiN) of unknown stoichimetry.</text>
</comment>
<comment type="subcellular location">
    <subcellularLocation>
        <location evidence="1">Cell inner membrane</location>
        <topology evidence="1">Multi-pass membrane protein</topology>
    </subcellularLocation>
</comment>
<comment type="similarity">
    <text evidence="1">Belongs to the CbiM family.</text>
</comment>
<proteinExistence type="inferred from homology"/>
<dbReference type="EMBL" id="CP000482">
    <property type="protein sequence ID" value="ABK98847.1"/>
    <property type="molecule type" value="Genomic_DNA"/>
</dbReference>
<dbReference type="RefSeq" id="WP_011735149.1">
    <property type="nucleotide sequence ID" value="NC_008609.1"/>
</dbReference>
<dbReference type="SMR" id="A1ANC7"/>
<dbReference type="STRING" id="338966.Ppro_1226"/>
<dbReference type="KEGG" id="ppd:Ppro_1226"/>
<dbReference type="eggNOG" id="COG0310">
    <property type="taxonomic scope" value="Bacteria"/>
</dbReference>
<dbReference type="HOGENOM" id="CLU_052508_3_0_7"/>
<dbReference type="OrthoDB" id="9809846at2"/>
<dbReference type="UniPathway" id="UPA00148"/>
<dbReference type="Proteomes" id="UP000006732">
    <property type="component" value="Chromosome"/>
</dbReference>
<dbReference type="GO" id="GO:0043190">
    <property type="term" value="C:ATP-binding cassette (ABC) transporter complex"/>
    <property type="evidence" value="ECO:0007669"/>
    <property type="project" value="InterPro"/>
</dbReference>
<dbReference type="GO" id="GO:0015087">
    <property type="term" value="F:cobalt ion transmembrane transporter activity"/>
    <property type="evidence" value="ECO:0007669"/>
    <property type="project" value="UniProtKB-UniRule"/>
</dbReference>
<dbReference type="GO" id="GO:0009236">
    <property type="term" value="P:cobalamin biosynthetic process"/>
    <property type="evidence" value="ECO:0007669"/>
    <property type="project" value="UniProtKB-UniRule"/>
</dbReference>
<dbReference type="FunFam" id="1.10.1760.20:FF:000001">
    <property type="entry name" value="Cobalt transport protein CbiM"/>
    <property type="match status" value="1"/>
</dbReference>
<dbReference type="Gene3D" id="1.10.1760.20">
    <property type="match status" value="1"/>
</dbReference>
<dbReference type="HAMAP" id="MF_01462">
    <property type="entry name" value="CbiM"/>
    <property type="match status" value="1"/>
</dbReference>
<dbReference type="InterPro" id="IPR018024">
    <property type="entry name" value="CbiM"/>
</dbReference>
<dbReference type="InterPro" id="IPR002751">
    <property type="entry name" value="CbiM/NikMN"/>
</dbReference>
<dbReference type="NCBIfam" id="TIGR00123">
    <property type="entry name" value="cbiM"/>
    <property type="match status" value="1"/>
</dbReference>
<dbReference type="NCBIfam" id="NF006184">
    <property type="entry name" value="PRK08319.1"/>
    <property type="match status" value="1"/>
</dbReference>
<dbReference type="PANTHER" id="PTHR43627">
    <property type="match status" value="1"/>
</dbReference>
<dbReference type="PANTHER" id="PTHR43627:SF1">
    <property type="entry name" value="COBALT TRANSPORT PROTEIN CBIM"/>
    <property type="match status" value="1"/>
</dbReference>
<dbReference type="Pfam" id="PF01891">
    <property type="entry name" value="CbiM"/>
    <property type="match status" value="1"/>
</dbReference>
<protein>
    <recommendedName>
        <fullName evidence="1">Cobalt transport protein CbiM 1</fullName>
    </recommendedName>
    <alternativeName>
        <fullName evidence="1">Energy-coupling factor transporter probable substrate-capture protein CbiM 1</fullName>
        <shortName evidence="1">ECF transporter S component CbiM 1</shortName>
    </alternativeName>
</protein>
<keyword id="KW-0997">Cell inner membrane</keyword>
<keyword id="KW-1003">Cell membrane</keyword>
<keyword id="KW-0169">Cobalamin biosynthesis</keyword>
<keyword id="KW-0170">Cobalt</keyword>
<keyword id="KW-0171">Cobalt transport</keyword>
<keyword id="KW-0406">Ion transport</keyword>
<keyword id="KW-0472">Membrane</keyword>
<keyword id="KW-1185">Reference proteome</keyword>
<keyword id="KW-0812">Transmembrane</keyword>
<keyword id="KW-1133">Transmembrane helix</keyword>
<keyword id="KW-0813">Transport</keyword>
<reference key="1">
    <citation type="submission" date="2006-10" db="EMBL/GenBank/DDBJ databases">
        <title>Complete sequence of chromosome of Pelobacter propionicus DSM 2379.</title>
        <authorList>
            <consortium name="US DOE Joint Genome Institute"/>
            <person name="Copeland A."/>
            <person name="Lucas S."/>
            <person name="Lapidus A."/>
            <person name="Barry K."/>
            <person name="Detter J.C."/>
            <person name="Glavina del Rio T."/>
            <person name="Hammon N."/>
            <person name="Israni S."/>
            <person name="Dalin E."/>
            <person name="Tice H."/>
            <person name="Pitluck S."/>
            <person name="Saunders E."/>
            <person name="Brettin T."/>
            <person name="Bruce D."/>
            <person name="Han C."/>
            <person name="Tapia R."/>
            <person name="Schmutz J."/>
            <person name="Larimer F."/>
            <person name="Land M."/>
            <person name="Hauser L."/>
            <person name="Kyrpides N."/>
            <person name="Kim E."/>
            <person name="Lovley D."/>
            <person name="Richardson P."/>
        </authorList>
    </citation>
    <scope>NUCLEOTIDE SEQUENCE [LARGE SCALE GENOMIC DNA]</scope>
    <source>
        <strain>DSM 2379 / NBRC 103807 / OttBd1</strain>
    </source>
</reference>
<accession>A1ANC7</accession>
<sequence>MHIMEGFLPVEHAIGWSVASAPVVAYGLYSINKKINKNPEQRMLLGVAAAFTFVLSALKMPSVTGSCSHPTGTGLGAILFGPSAVAPIGAVVLLFQALLLAHGGLTTLGANIFSMAIVGPFAAAAVFRLARAARFPFGVGVFLAASLGDLLTYVTTACQLAFAFPDPVGGFTASLAKFAGVFALTQIPLAISEGLLTVVVMNALLRFNREELGSLNIEGNGQEVQA</sequence>
<name>CBIM1_PELPD</name>
<organism>
    <name type="scientific">Pelobacter propionicus (strain DSM 2379 / NBRC 103807 / OttBd1)</name>
    <dbReference type="NCBI Taxonomy" id="338966"/>
    <lineage>
        <taxon>Bacteria</taxon>
        <taxon>Pseudomonadati</taxon>
        <taxon>Thermodesulfobacteriota</taxon>
        <taxon>Desulfuromonadia</taxon>
        <taxon>Desulfuromonadales</taxon>
        <taxon>Desulfuromonadaceae</taxon>
        <taxon>Pelobacter</taxon>
    </lineage>
</organism>
<gene>
    <name type="primary">cbim1</name>
    <name type="ordered locus">Ppro_1226</name>
</gene>
<evidence type="ECO:0000255" key="1">
    <source>
        <dbReference type="HAMAP-Rule" id="MF_01462"/>
    </source>
</evidence>